<accession>O07151</accession>
<evidence type="ECO:0000255" key="1">
    <source>
        <dbReference type="HAMAP-Rule" id="MF_00184"/>
    </source>
</evidence>
<evidence type="ECO:0000255" key="2">
    <source>
        <dbReference type="PROSITE-ProRule" id="PRU01228"/>
    </source>
</evidence>
<evidence type="ECO:0000256" key="3">
    <source>
        <dbReference type="SAM" id="MobiDB-lite"/>
    </source>
</evidence>
<organism>
    <name type="scientific">Mycobacterium leprae (strain TN)</name>
    <dbReference type="NCBI Taxonomy" id="272631"/>
    <lineage>
        <taxon>Bacteria</taxon>
        <taxon>Bacillati</taxon>
        <taxon>Actinomycetota</taxon>
        <taxon>Actinomycetes</taxon>
        <taxon>Mycobacteriales</taxon>
        <taxon>Mycobacteriaceae</taxon>
        <taxon>Mycobacterium</taxon>
    </lineage>
</organism>
<sequence length="702" mass="78372">MSAPVHPVPGADGGDPLRPATPGLRSPQVPIQVPAGSTAAAAVSEAGLPTHGAPDAIVVVRDADGKLRDLSWVPDVDVEVTPVPVNTDDGRSVIRHSTAHVLAQAVQDLFPQAKLGIGPPITDGFYYDFDVAEPFTPEDLKALEKRMRQIVKEGQLFSRRIYESKEQARTEWAGEPYKLELVDDESGDAEIMEVGGDELTAYDNLNARNGERIWGDLCRGPHIPTTKHIPAFKLTRSSAAYWRGNQKNASLQRIYGTAWESQEALDRHLEMITEAQRRDHRKLGIELDLFSFPDEIGSGLAIFHPKGSIVRREMEEYSRRKHIEAGYQFVNTPHITKAQLFHTSGHLDWYAEGIFPPMHLDAEHNDDGTVRKPGQDYYLKPMNCPMHTLIFSSRGRSYRELPLRLFEFGTIYRYEKSGVVHGLTRARGFTMDDSHIFCTREQLHCELASLLRFVLDLLGDYGLEDFYLELSTKDPEKFVGSEEIWEEATAALAEVAENSTLPLVPDPGGAAFYGPKISVQVRDALGRSWQMSTIQVDFNFPERFALEYTSADGTRQRPVMIHRALFGSIERFFGILTEHYAGAFPAWLAPIQVVGIPVTGEHVSYLEEVAAQLKSCGVRTEVDVSDDRMAKKIVRHTNQKVPFMLLAGDRDVRTGSVSFRFGDRTQINGVARDSAVEAIVCWIVDRENDFPTAELVKVTGGE</sequence>
<name>SYT_MYCLE</name>
<gene>
    <name evidence="1" type="primary">thrS</name>
    <name type="ordered locus">ML0456</name>
    <name type="ORF">MLCL581.18c</name>
</gene>
<keyword id="KW-0030">Aminoacyl-tRNA synthetase</keyword>
<keyword id="KW-0067">ATP-binding</keyword>
<keyword id="KW-0963">Cytoplasm</keyword>
<keyword id="KW-0436">Ligase</keyword>
<keyword id="KW-0479">Metal-binding</keyword>
<keyword id="KW-0547">Nucleotide-binding</keyword>
<keyword id="KW-0648">Protein biosynthesis</keyword>
<keyword id="KW-1185">Reference proteome</keyword>
<keyword id="KW-0694">RNA-binding</keyword>
<keyword id="KW-0820">tRNA-binding</keyword>
<keyword id="KW-0862">Zinc</keyword>
<feature type="chain" id="PRO_0000101008" description="Threonine--tRNA ligase">
    <location>
        <begin position="1"/>
        <end position="702"/>
    </location>
</feature>
<feature type="domain" description="TGS" evidence="2">
    <location>
        <begin position="15"/>
        <end position="84"/>
    </location>
</feature>
<feature type="region of interest" description="Disordered" evidence="3">
    <location>
        <begin position="1"/>
        <end position="30"/>
    </location>
</feature>
<feature type="region of interest" description="Catalytic" evidence="1">
    <location>
        <begin position="279"/>
        <end position="585"/>
    </location>
</feature>
<feature type="binding site" evidence="1">
    <location>
        <position position="384"/>
    </location>
    <ligand>
        <name>Zn(2+)</name>
        <dbReference type="ChEBI" id="CHEBI:29105"/>
    </ligand>
</feature>
<feature type="binding site" evidence="1">
    <location>
        <position position="435"/>
    </location>
    <ligand>
        <name>Zn(2+)</name>
        <dbReference type="ChEBI" id="CHEBI:29105"/>
    </ligand>
</feature>
<feature type="binding site" evidence="1">
    <location>
        <position position="562"/>
    </location>
    <ligand>
        <name>Zn(2+)</name>
        <dbReference type="ChEBI" id="CHEBI:29105"/>
    </ligand>
</feature>
<dbReference type="EC" id="6.1.1.3" evidence="1"/>
<dbReference type="EMBL" id="Z96801">
    <property type="protein sequence ID" value="CAB09620.1"/>
    <property type="molecule type" value="Genomic_DNA"/>
</dbReference>
<dbReference type="EMBL" id="AL583918">
    <property type="protein sequence ID" value="CAC29964.1"/>
    <property type="molecule type" value="Genomic_DNA"/>
</dbReference>
<dbReference type="PIR" id="H86965">
    <property type="entry name" value="H86965"/>
</dbReference>
<dbReference type="RefSeq" id="NP_301410.1">
    <property type="nucleotide sequence ID" value="NC_002677.1"/>
</dbReference>
<dbReference type="RefSeq" id="WP_010907734.1">
    <property type="nucleotide sequence ID" value="NC_002677.1"/>
</dbReference>
<dbReference type="SMR" id="O07151"/>
<dbReference type="STRING" id="272631.gene:17574277"/>
<dbReference type="KEGG" id="mle:ML0456"/>
<dbReference type="PATRIC" id="fig|272631.5.peg.799"/>
<dbReference type="Leproma" id="ML0456"/>
<dbReference type="eggNOG" id="COG0441">
    <property type="taxonomic scope" value="Bacteria"/>
</dbReference>
<dbReference type="HOGENOM" id="CLU_008554_0_1_11"/>
<dbReference type="OrthoDB" id="9802304at2"/>
<dbReference type="Proteomes" id="UP000000806">
    <property type="component" value="Chromosome"/>
</dbReference>
<dbReference type="GO" id="GO:0005737">
    <property type="term" value="C:cytoplasm"/>
    <property type="evidence" value="ECO:0007669"/>
    <property type="project" value="UniProtKB-SubCell"/>
</dbReference>
<dbReference type="GO" id="GO:0005524">
    <property type="term" value="F:ATP binding"/>
    <property type="evidence" value="ECO:0007669"/>
    <property type="project" value="UniProtKB-UniRule"/>
</dbReference>
<dbReference type="GO" id="GO:0046872">
    <property type="term" value="F:metal ion binding"/>
    <property type="evidence" value="ECO:0007669"/>
    <property type="project" value="UniProtKB-KW"/>
</dbReference>
<dbReference type="GO" id="GO:0004829">
    <property type="term" value="F:threonine-tRNA ligase activity"/>
    <property type="evidence" value="ECO:0007669"/>
    <property type="project" value="UniProtKB-UniRule"/>
</dbReference>
<dbReference type="GO" id="GO:0000049">
    <property type="term" value="F:tRNA binding"/>
    <property type="evidence" value="ECO:0007669"/>
    <property type="project" value="UniProtKB-KW"/>
</dbReference>
<dbReference type="GO" id="GO:0006435">
    <property type="term" value="P:threonyl-tRNA aminoacylation"/>
    <property type="evidence" value="ECO:0007669"/>
    <property type="project" value="UniProtKB-UniRule"/>
</dbReference>
<dbReference type="CDD" id="cd00860">
    <property type="entry name" value="ThrRS_anticodon"/>
    <property type="match status" value="1"/>
</dbReference>
<dbReference type="CDD" id="cd00771">
    <property type="entry name" value="ThrRS_core"/>
    <property type="match status" value="1"/>
</dbReference>
<dbReference type="FunFam" id="3.30.54.20:FF:000003">
    <property type="entry name" value="Threonine--tRNA ligase"/>
    <property type="match status" value="1"/>
</dbReference>
<dbReference type="FunFam" id="3.30.930.10:FF:000019">
    <property type="entry name" value="Threonine--tRNA ligase"/>
    <property type="match status" value="1"/>
</dbReference>
<dbReference type="FunFam" id="3.40.50.800:FF:000001">
    <property type="entry name" value="Threonine--tRNA ligase"/>
    <property type="match status" value="1"/>
</dbReference>
<dbReference type="FunFam" id="3.30.980.10:FF:000005">
    <property type="entry name" value="Threonyl-tRNA synthetase, mitochondrial"/>
    <property type="match status" value="1"/>
</dbReference>
<dbReference type="Gene3D" id="3.30.54.20">
    <property type="match status" value="1"/>
</dbReference>
<dbReference type="Gene3D" id="3.40.50.800">
    <property type="entry name" value="Anticodon-binding domain"/>
    <property type="match status" value="1"/>
</dbReference>
<dbReference type="Gene3D" id="3.30.930.10">
    <property type="entry name" value="Bira Bifunctional Protein, Domain 2"/>
    <property type="match status" value="1"/>
</dbReference>
<dbReference type="Gene3D" id="3.30.980.10">
    <property type="entry name" value="Threonyl-trna Synthetase, Chain A, domain 2"/>
    <property type="match status" value="1"/>
</dbReference>
<dbReference type="HAMAP" id="MF_00184">
    <property type="entry name" value="Thr_tRNA_synth"/>
    <property type="match status" value="1"/>
</dbReference>
<dbReference type="InterPro" id="IPR002314">
    <property type="entry name" value="aa-tRNA-synt_IIb"/>
</dbReference>
<dbReference type="InterPro" id="IPR006195">
    <property type="entry name" value="aa-tRNA-synth_II"/>
</dbReference>
<dbReference type="InterPro" id="IPR045864">
    <property type="entry name" value="aa-tRNA-synth_II/BPL/LPL"/>
</dbReference>
<dbReference type="InterPro" id="IPR004154">
    <property type="entry name" value="Anticodon-bd"/>
</dbReference>
<dbReference type="InterPro" id="IPR036621">
    <property type="entry name" value="Anticodon-bd_dom_sf"/>
</dbReference>
<dbReference type="InterPro" id="IPR004095">
    <property type="entry name" value="TGS"/>
</dbReference>
<dbReference type="InterPro" id="IPR002320">
    <property type="entry name" value="Thr-tRNA-ligase_IIa"/>
</dbReference>
<dbReference type="InterPro" id="IPR018163">
    <property type="entry name" value="Thr/Ala-tRNA-synth_IIc_edit"/>
</dbReference>
<dbReference type="InterPro" id="IPR047246">
    <property type="entry name" value="ThrRS_anticodon"/>
</dbReference>
<dbReference type="InterPro" id="IPR033728">
    <property type="entry name" value="ThrRS_core"/>
</dbReference>
<dbReference type="InterPro" id="IPR012947">
    <property type="entry name" value="tRNA_SAD"/>
</dbReference>
<dbReference type="NCBIfam" id="TIGR00418">
    <property type="entry name" value="thrS"/>
    <property type="match status" value="1"/>
</dbReference>
<dbReference type="PANTHER" id="PTHR11451:SF44">
    <property type="entry name" value="THREONINE--TRNA LIGASE, CHLOROPLASTIC_MITOCHONDRIAL 2"/>
    <property type="match status" value="1"/>
</dbReference>
<dbReference type="PANTHER" id="PTHR11451">
    <property type="entry name" value="THREONINE-TRNA LIGASE"/>
    <property type="match status" value="1"/>
</dbReference>
<dbReference type="Pfam" id="PF03129">
    <property type="entry name" value="HGTP_anticodon"/>
    <property type="match status" value="1"/>
</dbReference>
<dbReference type="Pfam" id="PF00587">
    <property type="entry name" value="tRNA-synt_2b"/>
    <property type="match status" value="1"/>
</dbReference>
<dbReference type="Pfam" id="PF07973">
    <property type="entry name" value="tRNA_SAD"/>
    <property type="match status" value="1"/>
</dbReference>
<dbReference type="PRINTS" id="PR01047">
    <property type="entry name" value="TRNASYNTHTHR"/>
</dbReference>
<dbReference type="SMART" id="SM00863">
    <property type="entry name" value="tRNA_SAD"/>
    <property type="match status" value="1"/>
</dbReference>
<dbReference type="SUPFAM" id="SSF52954">
    <property type="entry name" value="Class II aaRS ABD-related"/>
    <property type="match status" value="1"/>
</dbReference>
<dbReference type="SUPFAM" id="SSF55681">
    <property type="entry name" value="Class II aaRS and biotin synthetases"/>
    <property type="match status" value="1"/>
</dbReference>
<dbReference type="SUPFAM" id="SSF55186">
    <property type="entry name" value="ThrRS/AlaRS common domain"/>
    <property type="match status" value="1"/>
</dbReference>
<dbReference type="PROSITE" id="PS50862">
    <property type="entry name" value="AA_TRNA_LIGASE_II"/>
    <property type="match status" value="1"/>
</dbReference>
<dbReference type="PROSITE" id="PS51880">
    <property type="entry name" value="TGS"/>
    <property type="match status" value="1"/>
</dbReference>
<protein>
    <recommendedName>
        <fullName evidence="1">Threonine--tRNA ligase</fullName>
        <ecNumber evidence="1">6.1.1.3</ecNumber>
    </recommendedName>
    <alternativeName>
        <fullName evidence="1">Threonyl-tRNA synthetase</fullName>
        <shortName evidence="1">ThrRS</shortName>
    </alternativeName>
</protein>
<comment type="function">
    <text evidence="1">Catalyzes the attachment of threonine to tRNA(Thr) in a two-step reaction: L-threonine is first activated by ATP to form Thr-AMP and then transferred to the acceptor end of tRNA(Thr). Also edits incorrectly charged L-seryl-tRNA(Thr).</text>
</comment>
<comment type="catalytic activity">
    <reaction evidence="1">
        <text>tRNA(Thr) + L-threonine + ATP = L-threonyl-tRNA(Thr) + AMP + diphosphate + H(+)</text>
        <dbReference type="Rhea" id="RHEA:24624"/>
        <dbReference type="Rhea" id="RHEA-COMP:9670"/>
        <dbReference type="Rhea" id="RHEA-COMP:9704"/>
        <dbReference type="ChEBI" id="CHEBI:15378"/>
        <dbReference type="ChEBI" id="CHEBI:30616"/>
        <dbReference type="ChEBI" id="CHEBI:33019"/>
        <dbReference type="ChEBI" id="CHEBI:57926"/>
        <dbReference type="ChEBI" id="CHEBI:78442"/>
        <dbReference type="ChEBI" id="CHEBI:78534"/>
        <dbReference type="ChEBI" id="CHEBI:456215"/>
        <dbReference type="EC" id="6.1.1.3"/>
    </reaction>
</comment>
<comment type="cofactor">
    <cofactor evidence="1">
        <name>Zn(2+)</name>
        <dbReference type="ChEBI" id="CHEBI:29105"/>
    </cofactor>
    <text evidence="1">Binds 1 zinc ion per subunit.</text>
</comment>
<comment type="subunit">
    <text evidence="1">Homodimer.</text>
</comment>
<comment type="subcellular location">
    <subcellularLocation>
        <location evidence="1">Cytoplasm</location>
    </subcellularLocation>
</comment>
<comment type="similarity">
    <text evidence="1">Belongs to the class-II aminoacyl-tRNA synthetase family.</text>
</comment>
<reference key="1">
    <citation type="journal article" date="2001" name="Nature">
        <title>Massive gene decay in the leprosy bacillus.</title>
        <authorList>
            <person name="Cole S.T."/>
            <person name="Eiglmeier K."/>
            <person name="Parkhill J."/>
            <person name="James K.D."/>
            <person name="Thomson N.R."/>
            <person name="Wheeler P.R."/>
            <person name="Honore N."/>
            <person name="Garnier T."/>
            <person name="Churcher C.M."/>
            <person name="Harris D.E."/>
            <person name="Mungall K.L."/>
            <person name="Basham D."/>
            <person name="Brown D."/>
            <person name="Chillingworth T."/>
            <person name="Connor R."/>
            <person name="Davies R.M."/>
            <person name="Devlin K."/>
            <person name="Duthoy S."/>
            <person name="Feltwell T."/>
            <person name="Fraser A."/>
            <person name="Hamlin N."/>
            <person name="Holroyd S."/>
            <person name="Hornsby T."/>
            <person name="Jagels K."/>
            <person name="Lacroix C."/>
            <person name="Maclean J."/>
            <person name="Moule S."/>
            <person name="Murphy L.D."/>
            <person name="Oliver K."/>
            <person name="Quail M.A."/>
            <person name="Rajandream M.A."/>
            <person name="Rutherford K.M."/>
            <person name="Rutter S."/>
            <person name="Seeger K."/>
            <person name="Simon S."/>
            <person name="Simmonds M."/>
            <person name="Skelton J."/>
            <person name="Squares R."/>
            <person name="Squares S."/>
            <person name="Stevens K."/>
            <person name="Taylor K."/>
            <person name="Whitehead S."/>
            <person name="Woodward J.R."/>
            <person name="Barrell B.G."/>
        </authorList>
    </citation>
    <scope>NUCLEOTIDE SEQUENCE [LARGE SCALE GENOMIC DNA]</scope>
    <source>
        <strain>TN</strain>
    </source>
</reference>
<proteinExistence type="inferred from homology"/>